<proteinExistence type="evidence at transcript level"/>
<name>ZCHC4_XENTR</name>
<organism>
    <name type="scientific">Xenopus tropicalis</name>
    <name type="common">Western clawed frog</name>
    <name type="synonym">Silurana tropicalis</name>
    <dbReference type="NCBI Taxonomy" id="8364"/>
    <lineage>
        <taxon>Eukaryota</taxon>
        <taxon>Metazoa</taxon>
        <taxon>Chordata</taxon>
        <taxon>Craniata</taxon>
        <taxon>Vertebrata</taxon>
        <taxon>Euteleostomi</taxon>
        <taxon>Amphibia</taxon>
        <taxon>Batrachia</taxon>
        <taxon>Anura</taxon>
        <taxon>Pipoidea</taxon>
        <taxon>Pipidae</taxon>
        <taxon>Xenopodinae</taxon>
        <taxon>Xenopus</taxon>
        <taxon>Silurana</taxon>
    </lineage>
</organism>
<feature type="chain" id="PRO_0000150955" description="rRNA N(6)-adenosine-methyltransferase ZCCHC4">
    <location>
        <begin position="1"/>
        <end position="487"/>
    </location>
</feature>
<feature type="domain" description="DHHC" evidence="2">
    <location>
        <begin position="381"/>
        <end position="431"/>
    </location>
</feature>
<feature type="zinc finger region" description="GRF-type" evidence="3">
    <location>
        <begin position="28"/>
        <end position="70"/>
    </location>
</feature>
<feature type="zinc finger region" description="CCHC-type">
    <location>
        <begin position="429"/>
        <end position="446"/>
    </location>
</feature>
<feature type="region of interest" description="Regulatory loop" evidence="1">
    <location>
        <begin position="323"/>
        <end position="343"/>
    </location>
</feature>
<feature type="region of interest" description="Disordered" evidence="4">
    <location>
        <begin position="445"/>
        <end position="487"/>
    </location>
</feature>
<feature type="compositionally biased region" description="Basic residues" evidence="4">
    <location>
        <begin position="477"/>
        <end position="487"/>
    </location>
</feature>
<feature type="binding site" evidence="3">
    <location>
        <position position="28"/>
    </location>
    <ligand>
        <name>Zn(2+)</name>
        <dbReference type="ChEBI" id="CHEBI:29105"/>
        <label>1</label>
    </ligand>
</feature>
<feature type="binding site" evidence="3">
    <location>
        <position position="30"/>
    </location>
    <ligand>
        <name>Zn(2+)</name>
        <dbReference type="ChEBI" id="CHEBI:29105"/>
        <label>1</label>
    </ligand>
</feature>
<feature type="binding site" evidence="3">
    <location>
        <position position="52"/>
    </location>
    <ligand>
        <name>Zn(2+)</name>
        <dbReference type="ChEBI" id="CHEBI:29105"/>
        <label>1</label>
    </ligand>
</feature>
<feature type="binding site" evidence="3">
    <location>
        <position position="61"/>
    </location>
    <ligand>
        <name>Zn(2+)</name>
        <dbReference type="ChEBI" id="CHEBI:29105"/>
        <label>1</label>
    </ligand>
</feature>
<feature type="binding site" evidence="1">
    <location>
        <position position="113"/>
    </location>
    <ligand>
        <name>Zn(2+)</name>
        <dbReference type="ChEBI" id="CHEBI:29105"/>
        <label>2</label>
    </ligand>
</feature>
<feature type="binding site" evidence="1">
    <location>
        <position position="116"/>
    </location>
    <ligand>
        <name>Zn(2+)</name>
        <dbReference type="ChEBI" id="CHEBI:29105"/>
        <label>2</label>
    </ligand>
</feature>
<feature type="binding site" evidence="1">
    <location>
        <position position="128"/>
    </location>
    <ligand>
        <name>Zn(2+)</name>
        <dbReference type="ChEBI" id="CHEBI:29105"/>
        <label>2</label>
    </ligand>
</feature>
<feature type="binding site" evidence="1">
    <location>
        <position position="131"/>
    </location>
    <ligand>
        <name>Zn(2+)</name>
        <dbReference type="ChEBI" id="CHEBI:29105"/>
        <label>2</label>
    </ligand>
</feature>
<feature type="binding site" evidence="1">
    <location>
        <begin position="160"/>
        <end position="163"/>
    </location>
    <ligand>
        <name>S-adenosyl-L-methionine</name>
        <dbReference type="ChEBI" id="CHEBI:59789"/>
    </ligand>
</feature>
<feature type="binding site" evidence="1">
    <location>
        <position position="190"/>
    </location>
    <ligand>
        <name>S-adenosyl-L-methionine</name>
        <dbReference type="ChEBI" id="CHEBI:59789"/>
    </ligand>
</feature>
<feature type="binding site" evidence="1">
    <location>
        <position position="213"/>
    </location>
    <ligand>
        <name>S-adenosyl-L-methionine</name>
        <dbReference type="ChEBI" id="CHEBI:59789"/>
    </ligand>
</feature>
<feature type="binding site" evidence="1">
    <location>
        <begin position="231"/>
        <end position="232"/>
    </location>
    <ligand>
        <name>S-adenosyl-L-methionine</name>
        <dbReference type="ChEBI" id="CHEBI:59789"/>
    </ligand>
</feature>
<feature type="binding site" evidence="1">
    <location>
        <position position="264"/>
    </location>
    <ligand>
        <name>S-adenosyl-L-methionine</name>
        <dbReference type="ChEBI" id="CHEBI:59789"/>
    </ligand>
</feature>
<feature type="binding site" evidence="1">
    <location>
        <position position="366"/>
    </location>
    <ligand>
        <name>Zn(2+)</name>
        <dbReference type="ChEBI" id="CHEBI:29105"/>
        <label>3</label>
    </ligand>
</feature>
<feature type="binding site" evidence="1">
    <location>
        <position position="369"/>
    </location>
    <ligand>
        <name>Zn(2+)</name>
        <dbReference type="ChEBI" id="CHEBI:29105"/>
        <label>3</label>
    </ligand>
</feature>
<feature type="binding site" evidence="1">
    <location>
        <position position="379"/>
    </location>
    <ligand>
        <name>Zn(2+)</name>
        <dbReference type="ChEBI" id="CHEBI:29105"/>
        <label>3</label>
    </ligand>
</feature>
<feature type="binding site" evidence="1">
    <location>
        <position position="380"/>
    </location>
    <ligand>
        <name>Zn(2+)</name>
        <dbReference type="ChEBI" id="CHEBI:29105"/>
        <label>4</label>
    </ligand>
</feature>
<feature type="binding site" evidence="1">
    <location>
        <position position="383"/>
    </location>
    <ligand>
        <name>Zn(2+)</name>
        <dbReference type="ChEBI" id="CHEBI:29105"/>
        <label>4</label>
    </ligand>
</feature>
<feature type="binding site" evidence="1">
    <location>
        <position position="386"/>
    </location>
    <ligand>
        <name>Zn(2+)</name>
        <dbReference type="ChEBI" id="CHEBI:29105"/>
        <label>3</label>
    </ligand>
</feature>
<feature type="binding site" evidence="1">
    <location>
        <position position="396"/>
    </location>
    <ligand>
        <name>Zn(2+)</name>
        <dbReference type="ChEBI" id="CHEBI:29105"/>
        <label>4</label>
    </ligand>
</feature>
<feature type="binding site" evidence="1">
    <location>
        <position position="397"/>
    </location>
    <ligand>
        <name>Zn(2+)</name>
        <dbReference type="ChEBI" id="CHEBI:29105"/>
        <label>5</label>
    </ligand>
</feature>
<feature type="binding site" evidence="1">
    <location>
        <position position="400"/>
    </location>
    <ligand>
        <name>Zn(2+)</name>
        <dbReference type="ChEBI" id="CHEBI:29105"/>
        <label>5</label>
    </ligand>
</feature>
<feature type="binding site" evidence="1">
    <location>
        <position position="403"/>
    </location>
    <ligand>
        <name>Zn(2+)</name>
        <dbReference type="ChEBI" id="CHEBI:29105"/>
        <label>4</label>
    </ligand>
</feature>
<feature type="binding site" evidence="1">
    <location>
        <position position="410"/>
    </location>
    <ligand>
        <name>Zn(2+)</name>
        <dbReference type="ChEBI" id="CHEBI:29105"/>
        <label>5</label>
    </ligand>
</feature>
<feature type="binding site" evidence="1">
    <location>
        <position position="411"/>
    </location>
    <ligand>
        <name>Zn(2+)</name>
        <dbReference type="ChEBI" id="CHEBI:29105"/>
        <label>6</label>
    </ligand>
</feature>
<feature type="binding site" evidence="1">
    <location>
        <position position="414"/>
    </location>
    <ligand>
        <name>Zn(2+)</name>
        <dbReference type="ChEBI" id="CHEBI:29105"/>
        <label>6</label>
    </ligand>
</feature>
<feature type="binding site" evidence="1">
    <location>
        <position position="417"/>
    </location>
    <ligand>
        <name>Zn(2+)</name>
        <dbReference type="ChEBI" id="CHEBI:29105"/>
        <label>5</label>
    </ligand>
</feature>
<feature type="binding site" evidence="1">
    <location>
        <position position="422"/>
    </location>
    <ligand>
        <name>Zn(2+)</name>
        <dbReference type="ChEBI" id="CHEBI:29105"/>
        <label>6</label>
    </ligand>
</feature>
<feature type="binding site" evidence="1">
    <location>
        <position position="424"/>
    </location>
    <ligand>
        <name>Zn(2+)</name>
        <dbReference type="ChEBI" id="CHEBI:29105"/>
        <label>6</label>
    </ligand>
</feature>
<dbReference type="EC" id="2.1.1.-" evidence="1"/>
<dbReference type="EMBL" id="BC081342">
    <property type="protein sequence ID" value="AAH81342.1"/>
    <property type="molecule type" value="mRNA"/>
</dbReference>
<dbReference type="RefSeq" id="NP_001008134.1">
    <property type="nucleotide sequence ID" value="NM_001008133.1"/>
</dbReference>
<dbReference type="RefSeq" id="XP_012810057.2">
    <property type="nucleotide sequence ID" value="XM_012954603.3"/>
</dbReference>
<dbReference type="RefSeq" id="XP_017945078.2">
    <property type="nucleotide sequence ID" value="XM_018089589.2"/>
</dbReference>
<dbReference type="SMR" id="Q66IH9"/>
<dbReference type="FunCoup" id="Q66IH9">
    <property type="interactions" value="3145"/>
</dbReference>
<dbReference type="STRING" id="8364.ENSXETP00000009126"/>
<dbReference type="PaxDb" id="8364-ENSXETP00000002081"/>
<dbReference type="DNASU" id="493496"/>
<dbReference type="GeneID" id="493496"/>
<dbReference type="KEGG" id="xtr:493496"/>
<dbReference type="AGR" id="Xenbase:XB-GENE-1007153"/>
<dbReference type="CTD" id="29063"/>
<dbReference type="Xenbase" id="XB-GENE-1007153">
    <property type="gene designation" value="zcchc4"/>
</dbReference>
<dbReference type="eggNOG" id="KOG4399">
    <property type="taxonomic scope" value="Eukaryota"/>
</dbReference>
<dbReference type="InParanoid" id="Q66IH9"/>
<dbReference type="OMA" id="FPYFMEH"/>
<dbReference type="OrthoDB" id="431817at2759"/>
<dbReference type="Proteomes" id="UP000008143">
    <property type="component" value="Chromosome 1"/>
</dbReference>
<dbReference type="Bgee" id="ENSXETG00000000960">
    <property type="expression patterns" value="Expressed in 4-cell stage embryo and 12 other cell types or tissues"/>
</dbReference>
<dbReference type="GO" id="GO:0005737">
    <property type="term" value="C:cytoplasm"/>
    <property type="evidence" value="ECO:0000250"/>
    <property type="project" value="UniProtKB"/>
</dbReference>
<dbReference type="GO" id="GO:0005730">
    <property type="term" value="C:nucleolus"/>
    <property type="evidence" value="ECO:0000250"/>
    <property type="project" value="UniProtKB"/>
</dbReference>
<dbReference type="GO" id="GO:0003676">
    <property type="term" value="F:nucleic acid binding"/>
    <property type="evidence" value="ECO:0007669"/>
    <property type="project" value="InterPro"/>
</dbReference>
<dbReference type="GO" id="GO:0008988">
    <property type="term" value="F:rRNA (adenine-N6-)-methyltransferase activity"/>
    <property type="evidence" value="ECO:0000250"/>
    <property type="project" value="UniProtKB"/>
</dbReference>
<dbReference type="GO" id="GO:1904047">
    <property type="term" value="F:S-adenosyl-L-methionine binding"/>
    <property type="evidence" value="ECO:0000250"/>
    <property type="project" value="UniProtKB"/>
</dbReference>
<dbReference type="GO" id="GO:0008270">
    <property type="term" value="F:zinc ion binding"/>
    <property type="evidence" value="ECO:0000250"/>
    <property type="project" value="UniProtKB"/>
</dbReference>
<dbReference type="GO" id="GO:0045727">
    <property type="term" value="P:positive regulation of translation"/>
    <property type="evidence" value="ECO:0000250"/>
    <property type="project" value="UniProtKB"/>
</dbReference>
<dbReference type="GO" id="GO:0031167">
    <property type="term" value="P:rRNA methylation"/>
    <property type="evidence" value="ECO:0000250"/>
    <property type="project" value="UniProtKB"/>
</dbReference>
<dbReference type="InterPro" id="IPR002052">
    <property type="entry name" value="DNA_methylase_N6_adenine_CS"/>
</dbReference>
<dbReference type="InterPro" id="IPR041370">
    <property type="entry name" value="Mlase_EEF1AKMT1/ZCCHC4"/>
</dbReference>
<dbReference type="InterPro" id="IPR039846">
    <property type="entry name" value="ZCCHC4"/>
</dbReference>
<dbReference type="InterPro" id="IPR010666">
    <property type="entry name" value="Znf_GRF"/>
</dbReference>
<dbReference type="PANTHER" id="PTHR13493:SF3">
    <property type="entry name" value="RRNA N6-ADENOSINE-METHYLTRANSFERASE ZCCHC4"/>
    <property type="match status" value="1"/>
</dbReference>
<dbReference type="PANTHER" id="PTHR13493">
    <property type="entry name" value="ZINC FINGER CCHC DOMAIN-CONTAINING"/>
    <property type="match status" value="1"/>
</dbReference>
<dbReference type="Pfam" id="PF10237">
    <property type="entry name" value="N6-adenineMlase"/>
    <property type="match status" value="1"/>
</dbReference>
<dbReference type="Pfam" id="PF06839">
    <property type="entry name" value="Zn_ribbon_GRF"/>
    <property type="match status" value="1"/>
</dbReference>
<dbReference type="PROSITE" id="PS50216">
    <property type="entry name" value="DHHC"/>
    <property type="match status" value="1"/>
</dbReference>
<dbReference type="PROSITE" id="PS00092">
    <property type="entry name" value="N6_MTASE"/>
    <property type="match status" value="1"/>
</dbReference>
<dbReference type="PROSITE" id="PS51999">
    <property type="entry name" value="ZF_GRF"/>
    <property type="match status" value="1"/>
</dbReference>
<comment type="function">
    <text evidence="1">rRNA N6-methyltransferase that specifically methylates the adenine in position 4220 of 28S rRNA. N6-methylation of adenine(4220) in 28S rRNA is required for translation.</text>
</comment>
<comment type="catalytic activity">
    <reaction evidence="1">
        <text>adenosine(4220) in 28S rRNA + S-adenosyl-L-methionine = N(6)-methyladenosine(4220) in 28S rRNA + S-adenosyl-L-homocysteine + H(+)</text>
        <dbReference type="Rhea" id="RHEA:58724"/>
        <dbReference type="Rhea" id="RHEA-COMP:16142"/>
        <dbReference type="Rhea" id="RHEA-COMP:16143"/>
        <dbReference type="ChEBI" id="CHEBI:15378"/>
        <dbReference type="ChEBI" id="CHEBI:57856"/>
        <dbReference type="ChEBI" id="CHEBI:59789"/>
        <dbReference type="ChEBI" id="CHEBI:74411"/>
        <dbReference type="ChEBI" id="CHEBI:74449"/>
    </reaction>
</comment>
<comment type="subcellular location">
    <subcellularLocation>
        <location evidence="1">Cytoplasm</location>
    </subcellularLocation>
    <subcellularLocation>
        <location evidence="1">Nucleus</location>
        <location evidence="1">Nucleolus</location>
    </subcellularLocation>
    <text evidence="1">Accumulates in the nucleolus, where ribosome biogenesis takes place.</text>
</comment>
<comment type="domain">
    <text evidence="1">The regulatory loop blocks the catalytic center by bridging the methyltransferase domain and the C-terminal CCHC-type zinc finger, resulting in an autoinhibitory conformation.</text>
</comment>
<comment type="similarity">
    <text evidence="5">Belongs to the ZCCHC4 family.</text>
</comment>
<evidence type="ECO:0000250" key="1">
    <source>
        <dbReference type="UniProtKB" id="Q9H5U6"/>
    </source>
</evidence>
<evidence type="ECO:0000255" key="2">
    <source>
        <dbReference type="PROSITE-ProRule" id="PRU00067"/>
    </source>
</evidence>
<evidence type="ECO:0000255" key="3">
    <source>
        <dbReference type="PROSITE-ProRule" id="PRU01343"/>
    </source>
</evidence>
<evidence type="ECO:0000256" key="4">
    <source>
        <dbReference type="SAM" id="MobiDB-lite"/>
    </source>
</evidence>
<evidence type="ECO:0000305" key="5"/>
<sequence>MEGAEGSDSCDGIQVLLSREVIDAAPQCPHGPTLLFVKVSQGKEQGRRFYACSACRDRKDCHFFQWEDDKVSQARLAAREEYNKSHQPPMTHAQYVGRFQEFTELPLAKRKFCSDCQQLLLPTNWESHSGHRVLGDISLSQLKRPSQLLHPLENKKANAQYLFAERSCTFLMDTIIALGFRRVLCVGTPRLHELIKLRACEGATPPIKSLLLDIDFRYSQFYWEEEFCHYNMFNHHFFGGEAAKMVCQKFLQEEDGKGALLVTDPPFGGLVEPLAFSFKRLREMWKTTNPENESNLPILWMFPYFFESRILQCFPDFTMLDYQVDYDNHALYKHGKTGRKQSPVRIFTDLPPDKIVLPAIEGYRFCSVCERFVCSGNKHCNICNCCTSKDGRPWKHCTQCNKCVKPSWTHCSACNHCALPDHPCGTAGRGCFLCGGKDHKRRGCPHQSVSAHGKRMENLKQKNIKGSMKKQPIAATSKKRKRKRNNP</sequence>
<protein>
    <recommendedName>
        <fullName evidence="5">rRNA N(6)-adenosine-methyltransferase ZCCHC4</fullName>
        <ecNumber evidence="1">2.1.1.-</ecNumber>
    </recommendedName>
    <alternativeName>
        <fullName evidence="5">Zinc finger CCHC domain-containing protein 4</fullName>
    </alternativeName>
</protein>
<keyword id="KW-0963">Cytoplasm</keyword>
<keyword id="KW-0479">Metal-binding</keyword>
<keyword id="KW-0489">Methyltransferase</keyword>
<keyword id="KW-0539">Nucleus</keyword>
<keyword id="KW-1185">Reference proteome</keyword>
<keyword id="KW-0949">S-adenosyl-L-methionine</keyword>
<keyword id="KW-0808">Transferase</keyword>
<keyword id="KW-0862">Zinc</keyword>
<keyword id="KW-0863">Zinc-finger</keyword>
<reference key="1">
    <citation type="submission" date="2004-08" db="EMBL/GenBank/DDBJ databases">
        <authorList>
            <consortium name="NIH - Xenopus Gene Collection (XGC) project"/>
        </authorList>
    </citation>
    <scope>NUCLEOTIDE SEQUENCE [LARGE SCALE MRNA]</scope>
    <source>
        <tissue>Embryo</tissue>
    </source>
</reference>
<gene>
    <name type="primary">zcchc4</name>
</gene>
<accession>Q66IH9</accession>